<proteinExistence type="inferred from homology"/>
<name>QOX4_STAHJ</name>
<gene>
    <name type="primary">qoxD</name>
    <name type="ordered locus">SH1904</name>
</gene>
<organism>
    <name type="scientific">Staphylococcus haemolyticus (strain JCSC1435)</name>
    <dbReference type="NCBI Taxonomy" id="279808"/>
    <lineage>
        <taxon>Bacteria</taxon>
        <taxon>Bacillati</taxon>
        <taxon>Bacillota</taxon>
        <taxon>Bacilli</taxon>
        <taxon>Bacillales</taxon>
        <taxon>Staphylococcaceae</taxon>
        <taxon>Staphylococcus</taxon>
    </lineage>
</organism>
<comment type="function">
    <text evidence="1">Catalyzes quinol oxidation with the concomitant reduction of oxygen to water.</text>
</comment>
<comment type="catalytic activity">
    <reaction>
        <text>2 a quinol + O2 = 2 a quinone + 2 H2O</text>
        <dbReference type="Rhea" id="RHEA:55376"/>
        <dbReference type="ChEBI" id="CHEBI:15377"/>
        <dbReference type="ChEBI" id="CHEBI:15379"/>
        <dbReference type="ChEBI" id="CHEBI:24646"/>
        <dbReference type="ChEBI" id="CHEBI:132124"/>
    </reaction>
</comment>
<comment type="subcellular location">
    <subcellularLocation>
        <location evidence="1">Cell membrane</location>
        <topology evidence="1">Multi-pass membrane protein</topology>
    </subcellularLocation>
</comment>
<comment type="similarity">
    <text evidence="3">Belongs to the cytochrome c oxidase bacterial subunit 4 family.</text>
</comment>
<sequence length="96" mass="10685">MNTIVKHTVGFIASIVLTLLAVFVTLYTNMTFHAKTTIIFGFAFIQAAVQLLMFMHLTEGKDGQVQSFKVIFAIIITLVTVIGTYWVMQGGHSHHL</sequence>
<dbReference type="EC" id="1.10.3.-"/>
<dbReference type="EMBL" id="AP006716">
    <property type="protein sequence ID" value="BAE05213.1"/>
    <property type="molecule type" value="Genomic_DNA"/>
</dbReference>
<dbReference type="RefSeq" id="WP_011276176.1">
    <property type="nucleotide sequence ID" value="NC_007168.1"/>
</dbReference>
<dbReference type="SMR" id="Q4L562"/>
<dbReference type="GeneID" id="93781268"/>
<dbReference type="KEGG" id="sha:SH1904"/>
<dbReference type="eggNOG" id="COG3125">
    <property type="taxonomic scope" value="Bacteria"/>
</dbReference>
<dbReference type="HOGENOM" id="CLU_140945_2_0_9"/>
<dbReference type="OrthoDB" id="2361460at2"/>
<dbReference type="Proteomes" id="UP000000543">
    <property type="component" value="Chromosome"/>
</dbReference>
<dbReference type="GO" id="GO:0009319">
    <property type="term" value="C:cytochrome o ubiquinol oxidase complex"/>
    <property type="evidence" value="ECO:0007669"/>
    <property type="project" value="TreeGrafter"/>
</dbReference>
<dbReference type="GO" id="GO:0005886">
    <property type="term" value="C:plasma membrane"/>
    <property type="evidence" value="ECO:0007669"/>
    <property type="project" value="UniProtKB-SubCell"/>
</dbReference>
<dbReference type="GO" id="GO:0009486">
    <property type="term" value="F:cytochrome bo3 ubiquinol oxidase activity"/>
    <property type="evidence" value="ECO:0007669"/>
    <property type="project" value="TreeGrafter"/>
</dbReference>
<dbReference type="GO" id="GO:0016682">
    <property type="term" value="F:oxidoreductase activity, acting on diphenols and related substances as donors, oxygen as acceptor"/>
    <property type="evidence" value="ECO:0007669"/>
    <property type="project" value="InterPro"/>
</dbReference>
<dbReference type="GO" id="GO:0015078">
    <property type="term" value="F:proton transmembrane transporter activity"/>
    <property type="evidence" value="ECO:0007669"/>
    <property type="project" value="TreeGrafter"/>
</dbReference>
<dbReference type="GO" id="GO:0019646">
    <property type="term" value="P:aerobic electron transport chain"/>
    <property type="evidence" value="ECO:0007669"/>
    <property type="project" value="TreeGrafter"/>
</dbReference>
<dbReference type="GO" id="GO:0042773">
    <property type="term" value="P:ATP synthesis coupled electron transport"/>
    <property type="evidence" value="ECO:0007669"/>
    <property type="project" value="InterPro"/>
</dbReference>
<dbReference type="GO" id="GO:0015990">
    <property type="term" value="P:electron transport coupled proton transport"/>
    <property type="evidence" value="ECO:0007669"/>
    <property type="project" value="TreeGrafter"/>
</dbReference>
<dbReference type="InterPro" id="IPR005171">
    <property type="entry name" value="Cyt_c_oxidase_su4_prok"/>
</dbReference>
<dbReference type="InterPro" id="IPR050968">
    <property type="entry name" value="Cytochrome_c_oxidase_bac_sub4"/>
</dbReference>
<dbReference type="InterPro" id="IPR014250">
    <property type="entry name" value="QoxD"/>
</dbReference>
<dbReference type="NCBIfam" id="TIGR02901">
    <property type="entry name" value="QoxD"/>
    <property type="match status" value="1"/>
</dbReference>
<dbReference type="PANTHER" id="PTHR36835">
    <property type="entry name" value="CYTOCHROME BO(3) UBIQUINOL OXIDASE SUBUNIT 4"/>
    <property type="match status" value="1"/>
</dbReference>
<dbReference type="PANTHER" id="PTHR36835:SF1">
    <property type="entry name" value="CYTOCHROME BO(3) UBIQUINOL OXIDASE SUBUNIT 4"/>
    <property type="match status" value="1"/>
</dbReference>
<dbReference type="Pfam" id="PF03626">
    <property type="entry name" value="COX4_pro"/>
    <property type="match status" value="1"/>
</dbReference>
<protein>
    <recommendedName>
        <fullName>Probable quinol oxidase subunit 4</fullName>
        <ecNumber>1.10.3.-</ecNumber>
    </recommendedName>
    <alternativeName>
        <fullName>Quinol oxidase polypeptide IV</fullName>
    </alternativeName>
</protein>
<feature type="chain" id="PRO_0000275868" description="Probable quinol oxidase subunit 4">
    <location>
        <begin position="1"/>
        <end position="96"/>
    </location>
</feature>
<feature type="transmembrane region" description="Helical" evidence="2">
    <location>
        <begin position="8"/>
        <end position="28"/>
    </location>
</feature>
<feature type="transmembrane region" description="Helical" evidence="2">
    <location>
        <begin position="37"/>
        <end position="57"/>
    </location>
</feature>
<feature type="transmembrane region" description="Helical" evidence="2">
    <location>
        <begin position="68"/>
        <end position="88"/>
    </location>
</feature>
<accession>Q4L562</accession>
<keyword id="KW-1003">Cell membrane</keyword>
<keyword id="KW-0472">Membrane</keyword>
<keyword id="KW-0560">Oxidoreductase</keyword>
<keyword id="KW-0812">Transmembrane</keyword>
<keyword id="KW-1133">Transmembrane helix</keyword>
<evidence type="ECO:0000250" key="1"/>
<evidence type="ECO:0000255" key="2"/>
<evidence type="ECO:0000305" key="3"/>
<reference key="1">
    <citation type="journal article" date="2005" name="J. Bacteriol.">
        <title>Whole-genome sequencing of Staphylococcus haemolyticus uncovers the extreme plasticity of its genome and the evolution of human-colonizing staphylococcal species.</title>
        <authorList>
            <person name="Takeuchi F."/>
            <person name="Watanabe S."/>
            <person name="Baba T."/>
            <person name="Yuzawa H."/>
            <person name="Ito T."/>
            <person name="Morimoto Y."/>
            <person name="Kuroda M."/>
            <person name="Cui L."/>
            <person name="Takahashi M."/>
            <person name="Ankai A."/>
            <person name="Baba S."/>
            <person name="Fukui S."/>
            <person name="Lee J.C."/>
            <person name="Hiramatsu K."/>
        </authorList>
    </citation>
    <scope>NUCLEOTIDE SEQUENCE [LARGE SCALE GENOMIC DNA]</scope>
    <source>
        <strain>JCSC1435</strain>
    </source>
</reference>